<proteinExistence type="inferred from homology"/>
<comment type="function">
    <text evidence="1">Binds directly to 23S ribosomal RNA and is necessary for the in vitro assembly process of the 50S ribosomal subunit. It is not involved in the protein synthesizing functions of that subunit.</text>
</comment>
<comment type="similarity">
    <text evidence="1">Belongs to the bacterial ribosomal protein bL20 family.</text>
</comment>
<sequence length="119" mass="13644">MPRVKRGVTARARHKKIINLAKGYRGRRNNVYRIAKQAVMRAGQYAYRDRRNKKRVFRALWITRINAAVRQHDMTYSVFINGLKKASIELDRKVLADMAVFDKAAFAAIVKQVKAAVAA</sequence>
<organism>
    <name type="scientific">Burkholderia cenocepacia (strain ATCC BAA-245 / DSM 16553 / LMG 16656 / NCTC 13227 / J2315 / CF5610)</name>
    <name type="common">Burkholderia cepacia (strain J2315)</name>
    <dbReference type="NCBI Taxonomy" id="216591"/>
    <lineage>
        <taxon>Bacteria</taxon>
        <taxon>Pseudomonadati</taxon>
        <taxon>Pseudomonadota</taxon>
        <taxon>Betaproteobacteria</taxon>
        <taxon>Burkholderiales</taxon>
        <taxon>Burkholderiaceae</taxon>
        <taxon>Burkholderia</taxon>
        <taxon>Burkholderia cepacia complex</taxon>
    </lineage>
</organism>
<keyword id="KW-0687">Ribonucleoprotein</keyword>
<keyword id="KW-0689">Ribosomal protein</keyword>
<keyword id="KW-0694">RNA-binding</keyword>
<keyword id="KW-0699">rRNA-binding</keyword>
<gene>
    <name evidence="1" type="primary">rplT</name>
    <name type="ordered locus">BceJ2315_14500</name>
    <name type="ORF">BCAL1484</name>
</gene>
<feature type="chain" id="PRO_1000122284" description="Large ribosomal subunit protein bL20">
    <location>
        <begin position="1"/>
        <end position="119"/>
    </location>
</feature>
<accession>B4E7I8</accession>
<reference key="1">
    <citation type="journal article" date="2009" name="J. Bacteriol.">
        <title>The genome of Burkholderia cenocepacia J2315, an epidemic pathogen of cystic fibrosis patients.</title>
        <authorList>
            <person name="Holden M.T."/>
            <person name="Seth-Smith H.M."/>
            <person name="Crossman L.C."/>
            <person name="Sebaihia M."/>
            <person name="Bentley S.D."/>
            <person name="Cerdeno-Tarraga A.M."/>
            <person name="Thomson N.R."/>
            <person name="Bason N."/>
            <person name="Quail M.A."/>
            <person name="Sharp S."/>
            <person name="Cherevach I."/>
            <person name="Churcher C."/>
            <person name="Goodhead I."/>
            <person name="Hauser H."/>
            <person name="Holroyd N."/>
            <person name="Mungall K."/>
            <person name="Scott P."/>
            <person name="Walker D."/>
            <person name="White B."/>
            <person name="Rose H."/>
            <person name="Iversen P."/>
            <person name="Mil-Homens D."/>
            <person name="Rocha E.P."/>
            <person name="Fialho A.M."/>
            <person name="Baldwin A."/>
            <person name="Dowson C."/>
            <person name="Barrell B.G."/>
            <person name="Govan J.R."/>
            <person name="Vandamme P."/>
            <person name="Hart C.A."/>
            <person name="Mahenthiralingam E."/>
            <person name="Parkhill J."/>
        </authorList>
    </citation>
    <scope>NUCLEOTIDE SEQUENCE [LARGE SCALE GENOMIC DNA]</scope>
    <source>
        <strain>ATCC BAA-245 / DSM 16553 / LMG 16656 / NCTC 13227 / J2315 / CF5610</strain>
    </source>
</reference>
<dbReference type="EMBL" id="AM747720">
    <property type="protein sequence ID" value="CAR51783.1"/>
    <property type="molecule type" value="Genomic_DNA"/>
</dbReference>
<dbReference type="RefSeq" id="WP_004192938.1">
    <property type="nucleotide sequence ID" value="NC_011000.1"/>
</dbReference>
<dbReference type="SMR" id="B4E7I8"/>
<dbReference type="GeneID" id="98102114"/>
<dbReference type="KEGG" id="bcj:BCAL1484"/>
<dbReference type="eggNOG" id="COG0292">
    <property type="taxonomic scope" value="Bacteria"/>
</dbReference>
<dbReference type="HOGENOM" id="CLU_123265_0_1_4"/>
<dbReference type="BioCyc" id="BCEN216591:G1G1V-1651-MONOMER"/>
<dbReference type="Proteomes" id="UP000001035">
    <property type="component" value="Chromosome 1"/>
</dbReference>
<dbReference type="GO" id="GO:1990904">
    <property type="term" value="C:ribonucleoprotein complex"/>
    <property type="evidence" value="ECO:0007669"/>
    <property type="project" value="UniProtKB-KW"/>
</dbReference>
<dbReference type="GO" id="GO:0005840">
    <property type="term" value="C:ribosome"/>
    <property type="evidence" value="ECO:0007669"/>
    <property type="project" value="UniProtKB-KW"/>
</dbReference>
<dbReference type="GO" id="GO:0019843">
    <property type="term" value="F:rRNA binding"/>
    <property type="evidence" value="ECO:0007669"/>
    <property type="project" value="UniProtKB-UniRule"/>
</dbReference>
<dbReference type="GO" id="GO:0003735">
    <property type="term" value="F:structural constituent of ribosome"/>
    <property type="evidence" value="ECO:0007669"/>
    <property type="project" value="InterPro"/>
</dbReference>
<dbReference type="GO" id="GO:0000027">
    <property type="term" value="P:ribosomal large subunit assembly"/>
    <property type="evidence" value="ECO:0007669"/>
    <property type="project" value="UniProtKB-UniRule"/>
</dbReference>
<dbReference type="GO" id="GO:0006412">
    <property type="term" value="P:translation"/>
    <property type="evidence" value="ECO:0007669"/>
    <property type="project" value="InterPro"/>
</dbReference>
<dbReference type="CDD" id="cd07026">
    <property type="entry name" value="Ribosomal_L20"/>
    <property type="match status" value="1"/>
</dbReference>
<dbReference type="FunFam" id="1.10.1900.20:FF:000001">
    <property type="entry name" value="50S ribosomal protein L20"/>
    <property type="match status" value="1"/>
</dbReference>
<dbReference type="Gene3D" id="6.10.160.10">
    <property type="match status" value="1"/>
</dbReference>
<dbReference type="Gene3D" id="1.10.1900.20">
    <property type="entry name" value="Ribosomal protein L20"/>
    <property type="match status" value="1"/>
</dbReference>
<dbReference type="HAMAP" id="MF_00382">
    <property type="entry name" value="Ribosomal_bL20"/>
    <property type="match status" value="1"/>
</dbReference>
<dbReference type="InterPro" id="IPR005813">
    <property type="entry name" value="Ribosomal_bL20"/>
</dbReference>
<dbReference type="InterPro" id="IPR049946">
    <property type="entry name" value="RIBOSOMAL_L20_CS"/>
</dbReference>
<dbReference type="InterPro" id="IPR035566">
    <property type="entry name" value="Ribosomal_protein_bL20_C"/>
</dbReference>
<dbReference type="NCBIfam" id="TIGR01032">
    <property type="entry name" value="rplT_bact"/>
    <property type="match status" value="1"/>
</dbReference>
<dbReference type="PANTHER" id="PTHR10986">
    <property type="entry name" value="39S RIBOSOMAL PROTEIN L20"/>
    <property type="match status" value="1"/>
</dbReference>
<dbReference type="Pfam" id="PF00453">
    <property type="entry name" value="Ribosomal_L20"/>
    <property type="match status" value="1"/>
</dbReference>
<dbReference type="PRINTS" id="PR00062">
    <property type="entry name" value="RIBOSOMALL20"/>
</dbReference>
<dbReference type="SUPFAM" id="SSF74731">
    <property type="entry name" value="Ribosomal protein L20"/>
    <property type="match status" value="1"/>
</dbReference>
<dbReference type="PROSITE" id="PS00937">
    <property type="entry name" value="RIBOSOMAL_L20"/>
    <property type="match status" value="1"/>
</dbReference>
<evidence type="ECO:0000255" key="1">
    <source>
        <dbReference type="HAMAP-Rule" id="MF_00382"/>
    </source>
</evidence>
<evidence type="ECO:0000305" key="2"/>
<name>RL20_BURCJ</name>
<protein>
    <recommendedName>
        <fullName evidence="1">Large ribosomal subunit protein bL20</fullName>
    </recommendedName>
    <alternativeName>
        <fullName evidence="2">50S ribosomal protein L20</fullName>
    </alternativeName>
</protein>